<comment type="function">
    <text evidence="1">Facilitates the functional incorporation of the urease nickel metallocenter. This process requires GTP hydrolysis, probably effectuated by UreG.</text>
</comment>
<comment type="subunit">
    <text evidence="1">Homodimer. UreD, UreF and UreG form a complex that acts as a GTP-hydrolysis-dependent molecular chaperone, activating the urease apoprotein by helping to assemble the nickel containing metallocenter of UreC. The UreE protein probably delivers the nickel.</text>
</comment>
<comment type="subcellular location">
    <subcellularLocation>
        <location evidence="1">Cytoplasm</location>
    </subcellularLocation>
</comment>
<comment type="similarity">
    <text evidence="1">Belongs to the SIMIBI class G3E GTPase family. UreG subfamily.</text>
</comment>
<name>UREG_BURTA</name>
<sequence>MHAPHTATALRRTKKLPPLRVGIGGPVGSGKTTLLEMLCKGMRERYDLVAITNDIYTKEDQRLLTIAGALPEERIMGVETGGCPHTAIREDASINLEAVERMLARFPDADIVFIESGGDNLAATFSPELSDLTIYVIDVAGGEKIPRKGGPGITKSDLLVINKTDLAPLVGANLDVMASDTKKMRGERPYVMCNLKALDGVADVIAFIEKKGLLTV</sequence>
<accession>Q2SYG0</accession>
<dbReference type="EMBL" id="CP000086">
    <property type="protein sequence ID" value="ABC36807.1"/>
    <property type="molecule type" value="Genomic_DNA"/>
</dbReference>
<dbReference type="RefSeq" id="WP_009889610.1">
    <property type="nucleotide sequence ID" value="NZ_CP008785.1"/>
</dbReference>
<dbReference type="SMR" id="Q2SYG0"/>
<dbReference type="GeneID" id="45121234"/>
<dbReference type="KEGG" id="bte:BTH_I1493"/>
<dbReference type="HOGENOM" id="CLU_072144_1_0_4"/>
<dbReference type="Proteomes" id="UP000001930">
    <property type="component" value="Chromosome I"/>
</dbReference>
<dbReference type="GO" id="GO:0005737">
    <property type="term" value="C:cytoplasm"/>
    <property type="evidence" value="ECO:0007669"/>
    <property type="project" value="UniProtKB-SubCell"/>
</dbReference>
<dbReference type="GO" id="GO:0005525">
    <property type="term" value="F:GTP binding"/>
    <property type="evidence" value="ECO:0007669"/>
    <property type="project" value="UniProtKB-KW"/>
</dbReference>
<dbReference type="GO" id="GO:0003924">
    <property type="term" value="F:GTPase activity"/>
    <property type="evidence" value="ECO:0007669"/>
    <property type="project" value="InterPro"/>
</dbReference>
<dbReference type="GO" id="GO:0016151">
    <property type="term" value="F:nickel cation binding"/>
    <property type="evidence" value="ECO:0007669"/>
    <property type="project" value="UniProtKB-UniRule"/>
</dbReference>
<dbReference type="GO" id="GO:0043419">
    <property type="term" value="P:urea catabolic process"/>
    <property type="evidence" value="ECO:0007669"/>
    <property type="project" value="InterPro"/>
</dbReference>
<dbReference type="CDD" id="cd05540">
    <property type="entry name" value="UreG"/>
    <property type="match status" value="1"/>
</dbReference>
<dbReference type="FunFam" id="3.40.50.300:FF:000208">
    <property type="entry name" value="Urease accessory protein UreG"/>
    <property type="match status" value="1"/>
</dbReference>
<dbReference type="Gene3D" id="3.40.50.300">
    <property type="entry name" value="P-loop containing nucleotide triphosphate hydrolases"/>
    <property type="match status" value="1"/>
</dbReference>
<dbReference type="HAMAP" id="MF_01389">
    <property type="entry name" value="UreG"/>
    <property type="match status" value="1"/>
</dbReference>
<dbReference type="InterPro" id="IPR003495">
    <property type="entry name" value="CobW/HypB/UreG_nucleotide-bd"/>
</dbReference>
<dbReference type="InterPro" id="IPR027417">
    <property type="entry name" value="P-loop_NTPase"/>
</dbReference>
<dbReference type="InterPro" id="IPR004400">
    <property type="entry name" value="UreG"/>
</dbReference>
<dbReference type="NCBIfam" id="TIGR00101">
    <property type="entry name" value="ureG"/>
    <property type="match status" value="1"/>
</dbReference>
<dbReference type="PANTHER" id="PTHR31715">
    <property type="entry name" value="UREASE ACCESSORY PROTEIN G"/>
    <property type="match status" value="1"/>
</dbReference>
<dbReference type="PANTHER" id="PTHR31715:SF0">
    <property type="entry name" value="UREASE ACCESSORY PROTEIN G"/>
    <property type="match status" value="1"/>
</dbReference>
<dbReference type="Pfam" id="PF02492">
    <property type="entry name" value="cobW"/>
    <property type="match status" value="1"/>
</dbReference>
<dbReference type="PIRSF" id="PIRSF005624">
    <property type="entry name" value="Ni-bind_GTPase"/>
    <property type="match status" value="1"/>
</dbReference>
<dbReference type="SUPFAM" id="SSF52540">
    <property type="entry name" value="P-loop containing nucleoside triphosphate hydrolases"/>
    <property type="match status" value="1"/>
</dbReference>
<evidence type="ECO:0000255" key="1">
    <source>
        <dbReference type="HAMAP-Rule" id="MF_01389"/>
    </source>
</evidence>
<protein>
    <recommendedName>
        <fullName evidence="1">Urease accessory protein UreG</fullName>
    </recommendedName>
</protein>
<reference key="1">
    <citation type="journal article" date="2005" name="BMC Genomics">
        <title>Bacterial genome adaptation to niches: divergence of the potential virulence genes in three Burkholderia species of different survival strategies.</title>
        <authorList>
            <person name="Kim H.S."/>
            <person name="Schell M.A."/>
            <person name="Yu Y."/>
            <person name="Ulrich R.L."/>
            <person name="Sarria S.H."/>
            <person name="Nierman W.C."/>
            <person name="DeShazer D."/>
        </authorList>
    </citation>
    <scope>NUCLEOTIDE SEQUENCE [LARGE SCALE GENOMIC DNA]</scope>
    <source>
        <strain>ATCC 700388 / DSM 13276 / CCUG 48851 / CIP 106301 / E264</strain>
    </source>
</reference>
<keyword id="KW-0143">Chaperone</keyword>
<keyword id="KW-0963">Cytoplasm</keyword>
<keyword id="KW-0342">GTP-binding</keyword>
<keyword id="KW-0996">Nickel insertion</keyword>
<keyword id="KW-0547">Nucleotide-binding</keyword>
<proteinExistence type="inferred from homology"/>
<feature type="chain" id="PRO_0000347380" description="Urease accessory protein UreG">
    <location>
        <begin position="1"/>
        <end position="216"/>
    </location>
</feature>
<feature type="binding site" evidence="1">
    <location>
        <begin position="25"/>
        <end position="32"/>
    </location>
    <ligand>
        <name>GTP</name>
        <dbReference type="ChEBI" id="CHEBI:37565"/>
    </ligand>
</feature>
<gene>
    <name evidence="1" type="primary">ureG</name>
    <name type="ordered locus">BTH_I1493</name>
</gene>
<organism>
    <name type="scientific">Burkholderia thailandensis (strain ATCC 700388 / DSM 13276 / CCUG 48851 / CIP 106301 / E264)</name>
    <dbReference type="NCBI Taxonomy" id="271848"/>
    <lineage>
        <taxon>Bacteria</taxon>
        <taxon>Pseudomonadati</taxon>
        <taxon>Pseudomonadota</taxon>
        <taxon>Betaproteobacteria</taxon>
        <taxon>Burkholderiales</taxon>
        <taxon>Burkholderiaceae</taxon>
        <taxon>Burkholderia</taxon>
        <taxon>pseudomallei group</taxon>
    </lineage>
</organism>